<feature type="chain" id="PRO_0000223196" description="Acireductone dioxygenase 1">
    <location>
        <begin position="1"/>
        <end position="199"/>
    </location>
</feature>
<feature type="binding site" evidence="1">
    <location>
        <position position="99"/>
    </location>
    <ligand>
        <name>Fe(2+)</name>
        <dbReference type="ChEBI" id="CHEBI:29033"/>
        <note>for iron-dependent acireductone dioxygenase activity</note>
    </ligand>
</feature>
<feature type="binding site" evidence="1">
    <location>
        <position position="99"/>
    </location>
    <ligand>
        <name>Ni(2+)</name>
        <dbReference type="ChEBI" id="CHEBI:49786"/>
        <note>for nickel-dependent acireductone dioxygenase activity</note>
    </ligand>
</feature>
<feature type="binding site" evidence="1">
    <location>
        <position position="101"/>
    </location>
    <ligand>
        <name>Fe(2+)</name>
        <dbReference type="ChEBI" id="CHEBI:29033"/>
        <note>for iron-dependent acireductone dioxygenase activity</note>
    </ligand>
</feature>
<feature type="binding site" evidence="1">
    <location>
        <position position="101"/>
    </location>
    <ligand>
        <name>Ni(2+)</name>
        <dbReference type="ChEBI" id="CHEBI:49786"/>
        <note>for nickel-dependent acireductone dioxygenase activity</note>
    </ligand>
</feature>
<feature type="binding site" evidence="1">
    <location>
        <position position="105"/>
    </location>
    <ligand>
        <name>Fe(2+)</name>
        <dbReference type="ChEBI" id="CHEBI:29033"/>
        <note>for iron-dependent acireductone dioxygenase activity</note>
    </ligand>
</feature>
<feature type="binding site" evidence="1">
    <location>
        <position position="105"/>
    </location>
    <ligand>
        <name>Ni(2+)</name>
        <dbReference type="ChEBI" id="CHEBI:49786"/>
        <note>for nickel-dependent acireductone dioxygenase activity</note>
    </ligand>
</feature>
<feature type="binding site" evidence="1">
    <location>
        <position position="144"/>
    </location>
    <ligand>
        <name>Fe(2+)</name>
        <dbReference type="ChEBI" id="CHEBI:29033"/>
        <note>for iron-dependent acireductone dioxygenase activity</note>
    </ligand>
</feature>
<feature type="binding site" evidence="1">
    <location>
        <position position="144"/>
    </location>
    <ligand>
        <name>Ni(2+)</name>
        <dbReference type="ChEBI" id="CHEBI:49786"/>
        <note>for nickel-dependent acireductone dioxygenase activity</note>
    </ligand>
</feature>
<name>MTND1_ORYSJ</name>
<accession>A1L4T4</accession>
<accession>B7ET09</accession>
<accession>O65035</accession>
<accession>Q0IXN3</accession>
<accession>Q338A9</accession>
<gene>
    <name type="primary">ARD1</name>
    <name type="synonym">SIP2</name>
    <name type="ordered locus">Os10g0419400</name>
    <name type="ordered locus">LOC_Os10g28350</name>
    <name type="ORF">OSJNBa0006I13.11</name>
</gene>
<evidence type="ECO:0000255" key="1">
    <source>
        <dbReference type="HAMAP-Rule" id="MF_03154"/>
    </source>
</evidence>
<sequence>MENEFQDGKTEVIEAWYMDDSEEDQRLPHHREPKEFIHVDKLTELGVISWRLNPDNWENCENLKRIREARGYSYVDICDVCPEKLPNYETKIKSFFEEHLHTDEEIRYCLEGSGYFDVRDQNDQWIRIALKKGGMIVLPAGMYHRFTLDTDNYIKAMRLFVGDPVWTPYNRPHDHLPARKEFLAKLLKSEGENQAVEGF</sequence>
<reference key="1">
    <citation type="journal article" date="2003" name="Science">
        <title>In-depth view of structure, activity, and evolution of rice chromosome 10.</title>
        <authorList>
            <person name="Yu Y."/>
            <person name="Rambo T."/>
            <person name="Currie J."/>
            <person name="Saski C."/>
            <person name="Kim H.-R."/>
            <person name="Collura K."/>
            <person name="Thompson S."/>
            <person name="Simmons J."/>
            <person name="Yang T.-J."/>
            <person name="Nah G."/>
            <person name="Patel A.J."/>
            <person name="Thurmond S."/>
            <person name="Henry D."/>
            <person name="Oates R."/>
            <person name="Palmer M."/>
            <person name="Pries G."/>
            <person name="Gibson J."/>
            <person name="Anderson H."/>
            <person name="Paradkar M."/>
            <person name="Crane L."/>
            <person name="Dale J."/>
            <person name="Carver M.B."/>
            <person name="Wood T."/>
            <person name="Frisch D."/>
            <person name="Engler F."/>
            <person name="Soderlund C."/>
            <person name="Palmer L.E."/>
            <person name="Teytelman L."/>
            <person name="Nascimento L."/>
            <person name="De la Bastide M."/>
            <person name="Spiegel L."/>
            <person name="Ware D."/>
            <person name="O'Shaughnessy A."/>
            <person name="Dike S."/>
            <person name="Dedhia N."/>
            <person name="Preston R."/>
            <person name="Huang E."/>
            <person name="Ferraro K."/>
            <person name="Kuit K."/>
            <person name="Miller B."/>
            <person name="Zutavern T."/>
            <person name="Katzenberger F."/>
            <person name="Muller S."/>
            <person name="Balija V."/>
            <person name="Martienssen R.A."/>
            <person name="Stein L."/>
            <person name="Minx P."/>
            <person name="Johnson D."/>
            <person name="Cordum H."/>
            <person name="Mardis E."/>
            <person name="Cheng Z."/>
            <person name="Jiang J."/>
            <person name="Wilson R."/>
            <person name="McCombie W.R."/>
            <person name="Wing R.A."/>
            <person name="Yuan Q."/>
            <person name="Ouyang S."/>
            <person name="Liu J."/>
            <person name="Jones K.M."/>
            <person name="Gansberger K."/>
            <person name="Moffat K."/>
            <person name="Hill J."/>
            <person name="Tsitrin T."/>
            <person name="Overton L."/>
            <person name="Bera J."/>
            <person name="Kim M."/>
            <person name="Jin S."/>
            <person name="Tallon L."/>
            <person name="Ciecko A."/>
            <person name="Pai G."/>
            <person name="Van Aken S."/>
            <person name="Utterback T."/>
            <person name="Reidmuller S."/>
            <person name="Bormann J."/>
            <person name="Feldblyum T."/>
            <person name="Hsiao J."/>
            <person name="Zismann V."/>
            <person name="Blunt S."/>
            <person name="de Vazeille A.R."/>
            <person name="Shaffer T."/>
            <person name="Koo H."/>
            <person name="Suh B."/>
            <person name="Yang Q."/>
            <person name="Haas B."/>
            <person name="Peterson J."/>
            <person name="Pertea M."/>
            <person name="Volfovsky N."/>
            <person name="Wortman J."/>
            <person name="White O."/>
            <person name="Salzberg S.L."/>
            <person name="Fraser C.M."/>
            <person name="Buell C.R."/>
            <person name="Messing J."/>
            <person name="Song R."/>
            <person name="Fuks G."/>
            <person name="Llaca V."/>
            <person name="Kovchak S."/>
            <person name="Young S."/>
            <person name="Bowers J.E."/>
            <person name="Paterson A.H."/>
            <person name="Johns M.A."/>
            <person name="Mao L."/>
            <person name="Pan H."/>
            <person name="Dean R.A."/>
        </authorList>
    </citation>
    <scope>NUCLEOTIDE SEQUENCE [LARGE SCALE GENOMIC DNA]</scope>
    <source>
        <strain>cv. Nipponbare</strain>
    </source>
</reference>
<reference key="2">
    <citation type="journal article" date="2005" name="Nature">
        <title>The map-based sequence of the rice genome.</title>
        <authorList>
            <consortium name="International rice genome sequencing project (IRGSP)"/>
        </authorList>
    </citation>
    <scope>NUCLEOTIDE SEQUENCE [LARGE SCALE GENOMIC DNA]</scope>
    <source>
        <strain>cv. Nipponbare</strain>
    </source>
</reference>
<reference key="3">
    <citation type="journal article" date="2008" name="Nucleic Acids Res.">
        <title>The rice annotation project database (RAP-DB): 2008 update.</title>
        <authorList>
            <consortium name="The rice annotation project (RAP)"/>
        </authorList>
    </citation>
    <scope>GENOME REANNOTATION</scope>
    <source>
        <strain>cv. Nipponbare</strain>
    </source>
</reference>
<reference key="4">
    <citation type="journal article" date="2013" name="Rice">
        <title>Improvement of the Oryza sativa Nipponbare reference genome using next generation sequence and optical map data.</title>
        <authorList>
            <person name="Kawahara Y."/>
            <person name="de la Bastide M."/>
            <person name="Hamilton J.P."/>
            <person name="Kanamori H."/>
            <person name="McCombie W.R."/>
            <person name="Ouyang S."/>
            <person name="Schwartz D.C."/>
            <person name="Tanaka T."/>
            <person name="Wu J."/>
            <person name="Zhou S."/>
            <person name="Childs K.L."/>
            <person name="Davidson R.M."/>
            <person name="Lin H."/>
            <person name="Quesada-Ocampo L."/>
            <person name="Vaillancourt B."/>
            <person name="Sakai H."/>
            <person name="Lee S.S."/>
            <person name="Kim J."/>
            <person name="Numa H."/>
            <person name="Itoh T."/>
            <person name="Buell C.R."/>
            <person name="Matsumoto T."/>
        </authorList>
    </citation>
    <scope>GENOME REANNOTATION</scope>
    <source>
        <strain>cv. Nipponbare</strain>
    </source>
</reference>
<reference key="5">
    <citation type="journal article" date="2003" name="Science">
        <title>Collection, mapping, and annotation of over 28,000 cDNA clones from japonica rice.</title>
        <authorList>
            <consortium name="The rice full-length cDNA consortium"/>
        </authorList>
    </citation>
    <scope>NUCLEOTIDE SEQUENCE [LARGE SCALE MRNA]</scope>
    <source>
        <strain>cv. Nipponbare</strain>
    </source>
</reference>
<reference key="6">
    <citation type="journal article" date="2005" name="J. Exp. Bot.">
        <title>Expression of iron-acquisition-related genes in iron-deficient rice is co-ordinately induced by partially conserved iron-deficiency-responsive elements.</title>
        <authorList>
            <person name="Kobayashi T."/>
            <person name="Suzuki M."/>
            <person name="Inoue H."/>
            <person name="Itai R.N."/>
            <person name="Takahashi M."/>
            <person name="Nakanishi H."/>
            <person name="Mori S."/>
            <person name="Nishizawa N.K."/>
        </authorList>
    </citation>
    <scope>IDENTIFICATION</scope>
    <source>
        <strain>cv. Nipponbare</strain>
    </source>
</reference>
<protein>
    <recommendedName>
        <fullName evidence="1">Acireductone dioxygenase 1</fullName>
    </recommendedName>
    <alternativeName>
        <fullName evidence="1">Acireductone dioxygenase (Fe(2+)-requiring) 1</fullName>
        <shortName evidence="1">ARD' 1</shortName>
        <shortName evidence="1">Fe-ARD 1</shortName>
        <ecNumber evidence="1">1.13.11.54</ecNumber>
    </alternativeName>
    <alternativeName>
        <fullName evidence="1">Acireductone dioxygenase (Ni(2+)-requiring) 1</fullName>
        <shortName evidence="1">ARD 1</shortName>
        <shortName evidence="1">Ni-ARD 1</shortName>
        <ecNumber evidence="1">1.13.11.53</ecNumber>
    </alternativeName>
    <alternativeName>
        <fullName>OsIDI1</fullName>
    </alternativeName>
    <alternativeName>
        <fullName>Submergence-induced protein 2</fullName>
    </alternativeName>
</protein>
<comment type="function">
    <text evidence="1">Catalyzes 2 different reactions between oxygen and the acireductone 1,2-dihydroxy-3-keto-5-methylthiopentene (DHK-MTPene) depending upon the metal bound in the active site. Fe-containing acireductone dioxygenase (Fe-ARD) produces formate and 2-keto-4-methylthiobutyrate (KMTB), the alpha-ketoacid precursor of methionine in the methionine recycle pathway. Ni-containing acireductone dioxygenase (Ni-ARD) produces methylthiopropionate, carbon monoxide and formate, and does not lie on the methionine recycle pathway.</text>
</comment>
<comment type="catalytic activity">
    <reaction evidence="1">
        <text>1,2-dihydroxy-5-(methylsulfanyl)pent-1-en-3-one + O2 = 4-methylsulfanyl-2-oxobutanoate + formate + 2 H(+)</text>
        <dbReference type="Rhea" id="RHEA:24504"/>
        <dbReference type="ChEBI" id="CHEBI:15378"/>
        <dbReference type="ChEBI" id="CHEBI:15379"/>
        <dbReference type="ChEBI" id="CHEBI:15740"/>
        <dbReference type="ChEBI" id="CHEBI:16723"/>
        <dbReference type="ChEBI" id="CHEBI:49252"/>
        <dbReference type="EC" id="1.13.11.54"/>
    </reaction>
</comment>
<comment type="catalytic activity">
    <reaction evidence="1">
        <text>1,2-dihydroxy-5-(methylsulfanyl)pent-1-en-3-one + O2 = 3-(methylsulfanyl)propanoate + CO + formate + 2 H(+)</text>
        <dbReference type="Rhea" id="RHEA:14161"/>
        <dbReference type="ChEBI" id="CHEBI:15378"/>
        <dbReference type="ChEBI" id="CHEBI:15379"/>
        <dbReference type="ChEBI" id="CHEBI:15740"/>
        <dbReference type="ChEBI" id="CHEBI:17245"/>
        <dbReference type="ChEBI" id="CHEBI:49016"/>
        <dbReference type="ChEBI" id="CHEBI:49252"/>
        <dbReference type="EC" id="1.13.11.53"/>
    </reaction>
</comment>
<comment type="cofactor">
    <cofactor evidence="1">
        <name>Fe(2+)</name>
        <dbReference type="ChEBI" id="CHEBI:29033"/>
    </cofactor>
    <cofactor evidence="1">
        <name>Ni(2+)</name>
        <dbReference type="ChEBI" id="CHEBI:49786"/>
    </cofactor>
    <text evidence="1">Binds either 1 Fe or Ni cation per monomer. Iron-binding promotes an acireductone dioxygenase reaction producing 2-keto-4-methylthiobutyrate, while nickel-binding promotes an acireductone dioxygenase reaction producing 3-(methylsulfanyl)propanoate.</text>
</comment>
<comment type="pathway">
    <text evidence="1">Amino-acid biosynthesis; L-methionine biosynthesis via salvage pathway; L-methionine from S-methyl-5-thio-alpha-D-ribose 1-phosphate: step 5/6.</text>
</comment>
<comment type="subcellular location">
    <subcellularLocation>
        <location evidence="1">Cytoplasm</location>
    </subcellularLocation>
    <subcellularLocation>
        <location evidence="1">Nucleus</location>
    </subcellularLocation>
</comment>
<comment type="similarity">
    <text evidence="1">Belongs to the acireductone dioxygenase (ARD) family.</text>
</comment>
<keyword id="KW-0028">Amino-acid biosynthesis</keyword>
<keyword id="KW-0963">Cytoplasm</keyword>
<keyword id="KW-0223">Dioxygenase</keyword>
<keyword id="KW-0408">Iron</keyword>
<keyword id="KW-0479">Metal-binding</keyword>
<keyword id="KW-0486">Methionine biosynthesis</keyword>
<keyword id="KW-0533">Nickel</keyword>
<keyword id="KW-0539">Nucleus</keyword>
<keyword id="KW-0560">Oxidoreductase</keyword>
<keyword id="KW-1185">Reference proteome</keyword>
<dbReference type="EC" id="1.13.11.54" evidence="1"/>
<dbReference type="EC" id="1.13.11.53" evidence="1"/>
<dbReference type="EMBL" id="DP000086">
    <property type="protein sequence ID" value="ABB47627.1"/>
    <property type="molecule type" value="Genomic_DNA"/>
</dbReference>
<dbReference type="EMBL" id="AP008216">
    <property type="protein sequence ID" value="BAF26532.1"/>
    <property type="molecule type" value="Genomic_DNA"/>
</dbReference>
<dbReference type="EMBL" id="AP014966">
    <property type="protein sequence ID" value="BAT10876.1"/>
    <property type="molecule type" value="Genomic_DNA"/>
</dbReference>
<dbReference type="EMBL" id="AK102331">
    <property type="protein sequence ID" value="BAG95506.1"/>
    <property type="molecule type" value="mRNA"/>
</dbReference>
<dbReference type="EMBL" id="AK103834">
    <property type="protein sequence ID" value="BAG96278.1"/>
    <property type="molecule type" value="mRNA"/>
</dbReference>
<dbReference type="EMBL" id="BR000389">
    <property type="protein sequence ID" value="FAA00312.1"/>
    <property type="molecule type" value="mRNA"/>
</dbReference>
<dbReference type="SMR" id="A1L4T4"/>
<dbReference type="FunCoup" id="A1L4T4">
    <property type="interactions" value="2151"/>
</dbReference>
<dbReference type="STRING" id="39947.A1L4T4"/>
<dbReference type="PaxDb" id="39947-A1L4T4"/>
<dbReference type="EnsemblPlants" id="Os10t0419400-01">
    <property type="protein sequence ID" value="Os10t0419400-01"/>
    <property type="gene ID" value="Os10g0419400"/>
</dbReference>
<dbReference type="Gramene" id="Os10t0419400-01">
    <property type="protein sequence ID" value="Os10t0419400-01"/>
    <property type="gene ID" value="Os10g0419400"/>
</dbReference>
<dbReference type="KEGG" id="dosa:Os10g0419400"/>
<dbReference type="eggNOG" id="KOG2107">
    <property type="taxonomic scope" value="Eukaryota"/>
</dbReference>
<dbReference type="HOGENOM" id="CLU_090154_0_0_1"/>
<dbReference type="InParanoid" id="A1L4T4"/>
<dbReference type="OMA" id="YYKVDLD"/>
<dbReference type="BioCyc" id="MetaCyc:MONOMER-12674"/>
<dbReference type="UniPathway" id="UPA00904">
    <property type="reaction ID" value="UER00878"/>
</dbReference>
<dbReference type="Proteomes" id="UP000000763">
    <property type="component" value="Chromosome 10"/>
</dbReference>
<dbReference type="Proteomes" id="UP000059680">
    <property type="component" value="Chromosome 10"/>
</dbReference>
<dbReference type="GO" id="GO:0005737">
    <property type="term" value="C:cytoplasm"/>
    <property type="evidence" value="ECO:0007669"/>
    <property type="project" value="UniProtKB-SubCell"/>
</dbReference>
<dbReference type="GO" id="GO:0005634">
    <property type="term" value="C:nucleus"/>
    <property type="evidence" value="ECO:0007669"/>
    <property type="project" value="UniProtKB-SubCell"/>
</dbReference>
<dbReference type="GO" id="GO:0010308">
    <property type="term" value="F:acireductone dioxygenase (Ni2+-requiring) activity"/>
    <property type="evidence" value="ECO:0007669"/>
    <property type="project" value="UniProtKB-UniRule"/>
</dbReference>
<dbReference type="GO" id="GO:0010309">
    <property type="term" value="F:acireductone dioxygenase [iron(II)-requiring] activity"/>
    <property type="evidence" value="ECO:0000318"/>
    <property type="project" value="GO_Central"/>
</dbReference>
<dbReference type="GO" id="GO:0005506">
    <property type="term" value="F:iron ion binding"/>
    <property type="evidence" value="ECO:0007669"/>
    <property type="project" value="UniProtKB-UniRule"/>
</dbReference>
<dbReference type="GO" id="GO:0016151">
    <property type="term" value="F:nickel cation binding"/>
    <property type="evidence" value="ECO:0007669"/>
    <property type="project" value="UniProtKB-UniRule"/>
</dbReference>
<dbReference type="GO" id="GO:0019509">
    <property type="term" value="P:L-methionine salvage from methylthioadenosine"/>
    <property type="evidence" value="ECO:0007669"/>
    <property type="project" value="UniProtKB-UniRule"/>
</dbReference>
<dbReference type="GO" id="GO:0006555">
    <property type="term" value="P:methionine metabolic process"/>
    <property type="evidence" value="ECO:0000318"/>
    <property type="project" value="GO_Central"/>
</dbReference>
<dbReference type="CDD" id="cd02232">
    <property type="entry name" value="cupin_ARD"/>
    <property type="match status" value="1"/>
</dbReference>
<dbReference type="FunFam" id="2.60.120.10:FF:000031">
    <property type="entry name" value="1,2-dihydroxy-3-keto-5-methylthiopentene dioxygenase"/>
    <property type="match status" value="1"/>
</dbReference>
<dbReference type="Gene3D" id="2.60.120.10">
    <property type="entry name" value="Jelly Rolls"/>
    <property type="match status" value="1"/>
</dbReference>
<dbReference type="HAMAP" id="MF_03154">
    <property type="entry name" value="Salvage_MtnD_euk"/>
    <property type="match status" value="1"/>
</dbReference>
<dbReference type="InterPro" id="IPR004313">
    <property type="entry name" value="ARD"/>
</dbReference>
<dbReference type="InterPro" id="IPR027496">
    <property type="entry name" value="ARD_euk"/>
</dbReference>
<dbReference type="InterPro" id="IPR014710">
    <property type="entry name" value="RmlC-like_jellyroll"/>
</dbReference>
<dbReference type="InterPro" id="IPR011051">
    <property type="entry name" value="RmlC_Cupin_sf"/>
</dbReference>
<dbReference type="PANTHER" id="PTHR23418">
    <property type="entry name" value="ACIREDUCTONE DIOXYGENASE"/>
    <property type="match status" value="1"/>
</dbReference>
<dbReference type="PANTHER" id="PTHR23418:SF0">
    <property type="entry name" value="ACIREDUCTONE DIOXYGENASE"/>
    <property type="match status" value="1"/>
</dbReference>
<dbReference type="Pfam" id="PF03079">
    <property type="entry name" value="ARD"/>
    <property type="match status" value="1"/>
</dbReference>
<dbReference type="SUPFAM" id="SSF51182">
    <property type="entry name" value="RmlC-like cupins"/>
    <property type="match status" value="1"/>
</dbReference>
<organism>
    <name type="scientific">Oryza sativa subsp. japonica</name>
    <name type="common">Rice</name>
    <dbReference type="NCBI Taxonomy" id="39947"/>
    <lineage>
        <taxon>Eukaryota</taxon>
        <taxon>Viridiplantae</taxon>
        <taxon>Streptophyta</taxon>
        <taxon>Embryophyta</taxon>
        <taxon>Tracheophyta</taxon>
        <taxon>Spermatophyta</taxon>
        <taxon>Magnoliopsida</taxon>
        <taxon>Liliopsida</taxon>
        <taxon>Poales</taxon>
        <taxon>Poaceae</taxon>
        <taxon>BOP clade</taxon>
        <taxon>Oryzoideae</taxon>
        <taxon>Oryzeae</taxon>
        <taxon>Oryzinae</taxon>
        <taxon>Oryza</taxon>
        <taxon>Oryza sativa</taxon>
    </lineage>
</organism>
<proteinExistence type="evidence at transcript level"/>